<feature type="chain" id="PRO_1000144844" description="Phosphonoacetaldehyde hydrolase">
    <location>
        <begin position="1"/>
        <end position="269"/>
    </location>
</feature>
<feature type="active site" description="Nucleophile" evidence="1">
    <location>
        <position position="10"/>
    </location>
</feature>
<feature type="active site" description="Schiff-base intermediate with substrate" evidence="1">
    <location>
        <position position="52"/>
    </location>
</feature>
<feature type="binding site" evidence="1">
    <location>
        <position position="10"/>
    </location>
    <ligand>
        <name>Mg(2+)</name>
        <dbReference type="ChEBI" id="CHEBI:18420"/>
    </ligand>
</feature>
<feature type="binding site" evidence="1">
    <location>
        <position position="12"/>
    </location>
    <ligand>
        <name>Mg(2+)</name>
        <dbReference type="ChEBI" id="CHEBI:18420"/>
    </ligand>
</feature>
<feature type="binding site" evidence="1">
    <location>
        <position position="186"/>
    </location>
    <ligand>
        <name>Mg(2+)</name>
        <dbReference type="ChEBI" id="CHEBI:18420"/>
    </ligand>
</feature>
<evidence type="ECO:0000255" key="1">
    <source>
        <dbReference type="HAMAP-Rule" id="MF_01375"/>
    </source>
</evidence>
<proteinExistence type="inferred from homology"/>
<organism>
    <name type="scientific">Salmonella schwarzengrund (strain CVM19633)</name>
    <dbReference type="NCBI Taxonomy" id="439843"/>
    <lineage>
        <taxon>Bacteria</taxon>
        <taxon>Pseudomonadati</taxon>
        <taxon>Pseudomonadota</taxon>
        <taxon>Gammaproteobacteria</taxon>
        <taxon>Enterobacterales</taxon>
        <taxon>Enterobacteriaceae</taxon>
        <taxon>Salmonella</taxon>
    </lineage>
</organism>
<dbReference type="EC" id="3.11.1.1" evidence="1"/>
<dbReference type="EMBL" id="CP001127">
    <property type="protein sequence ID" value="ACF91031.1"/>
    <property type="molecule type" value="Genomic_DNA"/>
</dbReference>
<dbReference type="RefSeq" id="WP_001530701.1">
    <property type="nucleotide sequence ID" value="NC_011094.1"/>
</dbReference>
<dbReference type="SMR" id="B4TMB2"/>
<dbReference type="KEGG" id="sew:SeSA_A0492"/>
<dbReference type="HOGENOM" id="CLU_045011_12_0_6"/>
<dbReference type="Proteomes" id="UP000001865">
    <property type="component" value="Chromosome"/>
</dbReference>
<dbReference type="GO" id="GO:0005829">
    <property type="term" value="C:cytosol"/>
    <property type="evidence" value="ECO:0007669"/>
    <property type="project" value="TreeGrafter"/>
</dbReference>
<dbReference type="GO" id="GO:0000287">
    <property type="term" value="F:magnesium ion binding"/>
    <property type="evidence" value="ECO:0007669"/>
    <property type="project" value="UniProtKB-UniRule"/>
</dbReference>
<dbReference type="GO" id="GO:0008967">
    <property type="term" value="F:phosphoglycolate phosphatase activity"/>
    <property type="evidence" value="ECO:0007669"/>
    <property type="project" value="TreeGrafter"/>
</dbReference>
<dbReference type="GO" id="GO:0050194">
    <property type="term" value="F:phosphonoacetaldehyde hydrolase activity"/>
    <property type="evidence" value="ECO:0007669"/>
    <property type="project" value="UniProtKB-UniRule"/>
</dbReference>
<dbReference type="GO" id="GO:0006281">
    <property type="term" value="P:DNA repair"/>
    <property type="evidence" value="ECO:0007669"/>
    <property type="project" value="TreeGrafter"/>
</dbReference>
<dbReference type="GO" id="GO:0019700">
    <property type="term" value="P:organic phosphonate catabolic process"/>
    <property type="evidence" value="ECO:0007669"/>
    <property type="project" value="InterPro"/>
</dbReference>
<dbReference type="CDD" id="cd02586">
    <property type="entry name" value="HAD_PHN"/>
    <property type="match status" value="1"/>
</dbReference>
<dbReference type="FunFam" id="1.10.150.240:FF:000006">
    <property type="entry name" value="Phosphonoacetaldehyde hydrolase"/>
    <property type="match status" value="1"/>
</dbReference>
<dbReference type="FunFam" id="3.40.50.1000:FF:000072">
    <property type="entry name" value="Phosphonoacetaldehyde hydrolase"/>
    <property type="match status" value="1"/>
</dbReference>
<dbReference type="Gene3D" id="3.40.50.1000">
    <property type="entry name" value="HAD superfamily/HAD-like"/>
    <property type="match status" value="1"/>
</dbReference>
<dbReference type="Gene3D" id="1.10.150.240">
    <property type="entry name" value="Putative phosphatase, domain 2"/>
    <property type="match status" value="1"/>
</dbReference>
<dbReference type="HAMAP" id="MF_01375">
    <property type="entry name" value="PhnX"/>
    <property type="match status" value="1"/>
</dbReference>
<dbReference type="InterPro" id="IPR050155">
    <property type="entry name" value="HAD-like_hydrolase_sf"/>
</dbReference>
<dbReference type="InterPro" id="IPR036412">
    <property type="entry name" value="HAD-like_sf"/>
</dbReference>
<dbReference type="InterPro" id="IPR006439">
    <property type="entry name" value="HAD-SF_hydro_IA"/>
</dbReference>
<dbReference type="InterPro" id="IPR023214">
    <property type="entry name" value="HAD_sf"/>
</dbReference>
<dbReference type="InterPro" id="IPR023198">
    <property type="entry name" value="PGP-like_dom2"/>
</dbReference>
<dbReference type="InterPro" id="IPR006323">
    <property type="entry name" value="Phosphonoacetald_hydro"/>
</dbReference>
<dbReference type="NCBIfam" id="TIGR01509">
    <property type="entry name" value="HAD-SF-IA-v3"/>
    <property type="match status" value="1"/>
</dbReference>
<dbReference type="NCBIfam" id="TIGR01422">
    <property type="entry name" value="phosphonatase"/>
    <property type="match status" value="1"/>
</dbReference>
<dbReference type="PANTHER" id="PTHR43434">
    <property type="entry name" value="PHOSPHOGLYCOLATE PHOSPHATASE"/>
    <property type="match status" value="1"/>
</dbReference>
<dbReference type="PANTHER" id="PTHR43434:SF19">
    <property type="entry name" value="PHOSPHONOACETALDEHYDE HYDROLASE"/>
    <property type="match status" value="1"/>
</dbReference>
<dbReference type="Pfam" id="PF00702">
    <property type="entry name" value="Hydrolase"/>
    <property type="match status" value="1"/>
</dbReference>
<dbReference type="SFLD" id="SFLDG01129">
    <property type="entry name" value="C1.5:_HAD__Beta-PGM__Phosphata"/>
    <property type="match status" value="1"/>
</dbReference>
<dbReference type="SFLD" id="SFLDF00038">
    <property type="entry name" value="phosphonoacetaldehyde_hydrolas"/>
    <property type="match status" value="1"/>
</dbReference>
<dbReference type="SUPFAM" id="SSF56784">
    <property type="entry name" value="HAD-like"/>
    <property type="match status" value="1"/>
</dbReference>
<gene>
    <name evidence="1" type="primary">phnX</name>
    <name type="ordered locus">SeSA_A0492</name>
</gene>
<comment type="function">
    <text evidence="1">Involved in phosphonate degradation.</text>
</comment>
<comment type="catalytic activity">
    <reaction evidence="1">
        <text>phosphonoacetaldehyde + H2O = acetaldehyde + phosphate + H(+)</text>
        <dbReference type="Rhea" id="RHEA:18905"/>
        <dbReference type="ChEBI" id="CHEBI:15343"/>
        <dbReference type="ChEBI" id="CHEBI:15377"/>
        <dbReference type="ChEBI" id="CHEBI:15378"/>
        <dbReference type="ChEBI" id="CHEBI:43474"/>
        <dbReference type="ChEBI" id="CHEBI:58383"/>
        <dbReference type="EC" id="3.11.1.1"/>
    </reaction>
</comment>
<comment type="cofactor">
    <cofactor evidence="1">
        <name>Mg(2+)</name>
        <dbReference type="ChEBI" id="CHEBI:18420"/>
    </cofactor>
    <text evidence="1">Binds 1 Mg(2+) ion per subunit.</text>
</comment>
<comment type="subunit">
    <text evidence="1">Homodimer.</text>
</comment>
<comment type="similarity">
    <text evidence="1">Belongs to the HAD-like hydrolase superfamily. PhnX family.</text>
</comment>
<accession>B4TMB2</accession>
<name>PHNX_SALSV</name>
<reference key="1">
    <citation type="journal article" date="2011" name="J. Bacteriol.">
        <title>Comparative genomics of 28 Salmonella enterica isolates: evidence for CRISPR-mediated adaptive sublineage evolution.</title>
        <authorList>
            <person name="Fricke W.F."/>
            <person name="Mammel M.K."/>
            <person name="McDermott P.F."/>
            <person name="Tartera C."/>
            <person name="White D.G."/>
            <person name="Leclerc J.E."/>
            <person name="Ravel J."/>
            <person name="Cebula T.A."/>
        </authorList>
    </citation>
    <scope>NUCLEOTIDE SEQUENCE [LARGE SCALE GENOMIC DNA]</scope>
    <source>
        <strain>CVM19633</strain>
    </source>
</reference>
<sequence>MNRIHAVILDWAGTTVDFGSFAPTQIFVEAFRQAFDVEITLAEARVPMGLGKWQHIEALGKLPAVDARWQAKFGRSMSAADIDAIYAAFMPLQIAKVVDFSSPIAGVIDTIAALRAEGIKIGSCSGYPRAVMERLVPAAAEHGYRPDHWVATDDLAAGGRPGPWMALQNVIALGIDAVAHCVKVDDAAPGISEGLNAGMWTVGLAVSGNEFGATWDAYQTMSKEDVAVRREHAASKLYAAGAHYVVDSLADLPGVIAHINARLAQGERP</sequence>
<keyword id="KW-0378">Hydrolase</keyword>
<keyword id="KW-0460">Magnesium</keyword>
<keyword id="KW-0479">Metal-binding</keyword>
<keyword id="KW-0704">Schiff base</keyword>
<protein>
    <recommendedName>
        <fullName evidence="1">Phosphonoacetaldehyde hydrolase</fullName>
        <shortName evidence="1">Phosphonatase</shortName>
        <ecNumber evidence="1">3.11.1.1</ecNumber>
    </recommendedName>
    <alternativeName>
        <fullName evidence="1">Phosphonoacetaldehyde phosphonohydrolase</fullName>
    </alternativeName>
</protein>